<evidence type="ECO:0000255" key="1">
    <source>
        <dbReference type="HAMAP-Rule" id="MF_00651"/>
    </source>
</evidence>
<keyword id="KW-0963">Cytoplasm</keyword>
<keyword id="KW-0378">Hydrolase</keyword>
<keyword id="KW-0540">Nuclease</keyword>
<keyword id="KW-1185">Reference proteome</keyword>
<keyword id="KW-0690">Ribosome biogenesis</keyword>
<sequence length="130" mass="15559">MIILCFDYGIKIIGIAIAETKLNYSTPIKSIFNNKKKNFWNQINIIINMWKPKYIVIGYPYKIKKKINKKIKKFAKEIKKKFKINFFLCDENYSTTEALLFLKEKKKKKKYCLHSISAKIILDSWIRKNI</sequence>
<comment type="function">
    <text evidence="1">Could be a nuclease involved in processing of the 5'-end of pre-16S rRNA.</text>
</comment>
<comment type="subcellular location">
    <subcellularLocation>
        <location evidence="1">Cytoplasm</location>
    </subcellularLocation>
</comment>
<comment type="similarity">
    <text evidence="1">Belongs to the YqgF nuclease family.</text>
</comment>
<name>YQGF_BUCCC</name>
<feature type="chain" id="PRO_1000147467" description="Putative pre-16S rRNA nuclease">
    <location>
        <begin position="1"/>
        <end position="130"/>
    </location>
</feature>
<accession>Q056Y6</accession>
<organism>
    <name type="scientific">Buchnera aphidicola subsp. Cinara cedri (strain Cc)</name>
    <dbReference type="NCBI Taxonomy" id="372461"/>
    <lineage>
        <taxon>Bacteria</taxon>
        <taxon>Pseudomonadati</taxon>
        <taxon>Pseudomonadota</taxon>
        <taxon>Gammaproteobacteria</taxon>
        <taxon>Enterobacterales</taxon>
        <taxon>Erwiniaceae</taxon>
        <taxon>Buchnera</taxon>
    </lineage>
</organism>
<dbReference type="EC" id="3.1.-.-" evidence="1"/>
<dbReference type="EMBL" id="CP000263">
    <property type="protein sequence ID" value="ABJ90813.1"/>
    <property type="molecule type" value="Genomic_DNA"/>
</dbReference>
<dbReference type="RefSeq" id="WP_011672732.1">
    <property type="nucleotide sequence ID" value="NC_008513.1"/>
</dbReference>
<dbReference type="SMR" id="Q056Y6"/>
<dbReference type="STRING" id="372461.BCc_360"/>
<dbReference type="KEGG" id="bcc:BCc_360"/>
<dbReference type="eggNOG" id="COG0816">
    <property type="taxonomic scope" value="Bacteria"/>
</dbReference>
<dbReference type="HOGENOM" id="CLU_098240_2_1_6"/>
<dbReference type="Proteomes" id="UP000000669">
    <property type="component" value="Chromosome"/>
</dbReference>
<dbReference type="GO" id="GO:0005829">
    <property type="term" value="C:cytosol"/>
    <property type="evidence" value="ECO:0007669"/>
    <property type="project" value="TreeGrafter"/>
</dbReference>
<dbReference type="GO" id="GO:0004518">
    <property type="term" value="F:nuclease activity"/>
    <property type="evidence" value="ECO:0007669"/>
    <property type="project" value="UniProtKB-KW"/>
</dbReference>
<dbReference type="GO" id="GO:0000967">
    <property type="term" value="P:rRNA 5'-end processing"/>
    <property type="evidence" value="ECO:0007669"/>
    <property type="project" value="UniProtKB-UniRule"/>
</dbReference>
<dbReference type="Gene3D" id="3.30.420.140">
    <property type="entry name" value="YqgF/RNase H-like domain"/>
    <property type="match status" value="1"/>
</dbReference>
<dbReference type="HAMAP" id="MF_00651">
    <property type="entry name" value="Nuclease_YqgF"/>
    <property type="match status" value="1"/>
</dbReference>
<dbReference type="InterPro" id="IPR012337">
    <property type="entry name" value="RNaseH-like_sf"/>
</dbReference>
<dbReference type="InterPro" id="IPR005227">
    <property type="entry name" value="YqgF"/>
</dbReference>
<dbReference type="InterPro" id="IPR006641">
    <property type="entry name" value="YqgF/RNaseH-like_dom"/>
</dbReference>
<dbReference type="InterPro" id="IPR037027">
    <property type="entry name" value="YqgF/RNaseH-like_dom_sf"/>
</dbReference>
<dbReference type="NCBIfam" id="TIGR00250">
    <property type="entry name" value="RNAse_H_YqgF"/>
    <property type="match status" value="1"/>
</dbReference>
<dbReference type="PANTHER" id="PTHR33317">
    <property type="entry name" value="POLYNUCLEOTIDYL TRANSFERASE, RIBONUCLEASE H-LIKE SUPERFAMILY PROTEIN"/>
    <property type="match status" value="1"/>
</dbReference>
<dbReference type="PANTHER" id="PTHR33317:SF4">
    <property type="entry name" value="POLYNUCLEOTIDYL TRANSFERASE, RIBONUCLEASE H-LIKE SUPERFAMILY PROTEIN"/>
    <property type="match status" value="1"/>
</dbReference>
<dbReference type="Pfam" id="PF03652">
    <property type="entry name" value="RuvX"/>
    <property type="match status" value="1"/>
</dbReference>
<dbReference type="SMART" id="SM00732">
    <property type="entry name" value="YqgFc"/>
    <property type="match status" value="1"/>
</dbReference>
<dbReference type="SUPFAM" id="SSF53098">
    <property type="entry name" value="Ribonuclease H-like"/>
    <property type="match status" value="1"/>
</dbReference>
<reference key="1">
    <citation type="journal article" date="2006" name="Science">
        <title>A small microbial genome: the end of a long symbiotic relationship?</title>
        <authorList>
            <person name="Perez-Brocal V."/>
            <person name="Gil R."/>
            <person name="Ramos S."/>
            <person name="Lamelas A."/>
            <person name="Postigo M."/>
            <person name="Michelena J.M."/>
            <person name="Silva F.J."/>
            <person name="Moya A."/>
            <person name="Latorre A."/>
        </authorList>
    </citation>
    <scope>NUCLEOTIDE SEQUENCE [LARGE SCALE GENOMIC DNA]</scope>
    <source>
        <strain>Cc</strain>
    </source>
</reference>
<protein>
    <recommendedName>
        <fullName evidence="1">Putative pre-16S rRNA nuclease</fullName>
        <ecNumber evidence="1">3.1.-.-</ecNumber>
    </recommendedName>
</protein>
<proteinExistence type="inferred from homology"/>
<gene>
    <name evidence="1" type="primary">yqgF</name>
    <name type="ordered locus">BCc_360</name>
</gene>